<reference key="1">
    <citation type="submission" date="2002-12" db="EMBL/GenBank/DDBJ databases">
        <title>Complete genome sequence of Vibrio vulnificus CMCP6.</title>
        <authorList>
            <person name="Rhee J.H."/>
            <person name="Kim S.Y."/>
            <person name="Chung S.S."/>
            <person name="Kim J.J."/>
            <person name="Moon Y.H."/>
            <person name="Jeong H."/>
            <person name="Choy H.E."/>
        </authorList>
    </citation>
    <scope>NUCLEOTIDE SEQUENCE [LARGE SCALE GENOMIC DNA]</scope>
    <source>
        <strain>CMCP6</strain>
    </source>
</reference>
<keyword id="KW-0378">Hydrolase</keyword>
<keyword id="KW-0479">Metal-binding</keyword>
<keyword id="KW-0862">Zinc</keyword>
<proteinExistence type="inferred from homology"/>
<protein>
    <recommendedName>
        <fullName evidence="1">Cytidine deaminase</fullName>
        <ecNumber evidence="1">3.5.4.5</ecNumber>
    </recommendedName>
    <alternativeName>
        <fullName evidence="1">Cytidine aminohydrolase</fullName>
        <shortName evidence="1">CDA</shortName>
    </alternativeName>
</protein>
<name>CDD_VIBVU</name>
<comment type="function">
    <text evidence="1">This enzyme scavenges exogenous and endogenous cytidine and 2'-deoxycytidine for UMP synthesis.</text>
</comment>
<comment type="catalytic activity">
    <reaction evidence="1">
        <text>cytidine + H2O + H(+) = uridine + NH4(+)</text>
        <dbReference type="Rhea" id="RHEA:16069"/>
        <dbReference type="ChEBI" id="CHEBI:15377"/>
        <dbReference type="ChEBI" id="CHEBI:15378"/>
        <dbReference type="ChEBI" id="CHEBI:16704"/>
        <dbReference type="ChEBI" id="CHEBI:17562"/>
        <dbReference type="ChEBI" id="CHEBI:28938"/>
        <dbReference type="EC" id="3.5.4.5"/>
    </reaction>
</comment>
<comment type="catalytic activity">
    <reaction evidence="1">
        <text>2'-deoxycytidine + H2O + H(+) = 2'-deoxyuridine + NH4(+)</text>
        <dbReference type="Rhea" id="RHEA:13433"/>
        <dbReference type="ChEBI" id="CHEBI:15377"/>
        <dbReference type="ChEBI" id="CHEBI:15378"/>
        <dbReference type="ChEBI" id="CHEBI:15698"/>
        <dbReference type="ChEBI" id="CHEBI:16450"/>
        <dbReference type="ChEBI" id="CHEBI:28938"/>
        <dbReference type="EC" id="3.5.4.5"/>
    </reaction>
</comment>
<comment type="cofactor">
    <cofactor evidence="1">
        <name>Zn(2+)</name>
        <dbReference type="ChEBI" id="CHEBI:29105"/>
    </cofactor>
    <text evidence="1">Binds 1 zinc ion.</text>
</comment>
<comment type="subunit">
    <text evidence="1">Homodimer.</text>
</comment>
<comment type="similarity">
    <text evidence="1">Belongs to the cytidine and deoxycytidylate deaminase family.</text>
</comment>
<comment type="sequence caution" evidence="3">
    <conflict type="erroneous initiation">
        <sequence resource="EMBL-CDS" id="AAO10753"/>
    </conflict>
</comment>
<accession>Q8DA31</accession>
<gene>
    <name evidence="1" type="primary">cdd</name>
    <name type="ordered locus">VV1_2379</name>
</gene>
<organism>
    <name type="scientific">Vibrio vulnificus (strain CMCP6)</name>
    <dbReference type="NCBI Taxonomy" id="216895"/>
    <lineage>
        <taxon>Bacteria</taxon>
        <taxon>Pseudomonadati</taxon>
        <taxon>Pseudomonadota</taxon>
        <taxon>Gammaproteobacteria</taxon>
        <taxon>Vibrionales</taxon>
        <taxon>Vibrionaceae</taxon>
        <taxon>Vibrio</taxon>
    </lineage>
</organism>
<evidence type="ECO:0000255" key="1">
    <source>
        <dbReference type="HAMAP-Rule" id="MF_01558"/>
    </source>
</evidence>
<evidence type="ECO:0000255" key="2">
    <source>
        <dbReference type="PROSITE-ProRule" id="PRU01083"/>
    </source>
</evidence>
<evidence type="ECO:0000305" key="3"/>
<sequence>MKSRFENALASAPESLSRHLAPIILAADFDASLSTVQFDELLKQTGMTDNQLRVALLPFAAAYSYAPISEFYVGAIVRGLSGALYFGANMEFDGVQLGQTVHAEQSAISHAWMKGEQGLSDITINFSPCGHCRQFMNELSSAKELKIQLPEREEKKLHDYLPDSFGPSDLGIESALMSQVHHGFATEDDDALMQRAVEAMNRSHAPYTHNLSGVALQTESGRVYLGAYAENAAFNPSLPPLQVALIQLLLAGERFENIQSAALVESHKGKISHLACTQSTLEALNPDIPVSYLSL</sequence>
<feature type="chain" id="PRO_0000171672" description="Cytidine deaminase">
    <location>
        <begin position="1"/>
        <end position="295"/>
    </location>
</feature>
<feature type="domain" description="CMP/dCMP-type deaminase 1" evidence="2">
    <location>
        <begin position="48"/>
        <end position="168"/>
    </location>
</feature>
<feature type="domain" description="CMP/dCMP-type deaminase 2" evidence="2">
    <location>
        <begin position="187"/>
        <end position="295"/>
    </location>
</feature>
<feature type="active site" description="Proton donor" evidence="1">
    <location>
        <position position="104"/>
    </location>
</feature>
<feature type="binding site" evidence="1">
    <location>
        <begin position="89"/>
        <end position="91"/>
    </location>
    <ligand>
        <name>substrate</name>
    </ligand>
</feature>
<feature type="binding site" evidence="1">
    <location>
        <position position="102"/>
    </location>
    <ligand>
        <name>Zn(2+)</name>
        <dbReference type="ChEBI" id="CHEBI:29105"/>
        <note>catalytic</note>
    </ligand>
</feature>
<feature type="binding site" evidence="1">
    <location>
        <position position="129"/>
    </location>
    <ligand>
        <name>Zn(2+)</name>
        <dbReference type="ChEBI" id="CHEBI:29105"/>
        <note>catalytic</note>
    </ligand>
</feature>
<feature type="binding site" evidence="1">
    <location>
        <position position="132"/>
    </location>
    <ligand>
        <name>Zn(2+)</name>
        <dbReference type="ChEBI" id="CHEBI:29105"/>
        <note>catalytic</note>
    </ligand>
</feature>
<dbReference type="EC" id="3.5.4.5" evidence="1"/>
<dbReference type="EMBL" id="AE016795">
    <property type="protein sequence ID" value="AAO10753.1"/>
    <property type="status" value="ALT_INIT"/>
    <property type="molecule type" value="Genomic_DNA"/>
</dbReference>
<dbReference type="RefSeq" id="WP_013571574.1">
    <property type="nucleotide sequence ID" value="NC_004459.3"/>
</dbReference>
<dbReference type="SMR" id="Q8DA31"/>
<dbReference type="KEGG" id="vvu:VV1_2379"/>
<dbReference type="HOGENOM" id="CLU_052424_0_0_6"/>
<dbReference type="Proteomes" id="UP000002275">
    <property type="component" value="Chromosome 1"/>
</dbReference>
<dbReference type="GO" id="GO:0005829">
    <property type="term" value="C:cytosol"/>
    <property type="evidence" value="ECO:0007669"/>
    <property type="project" value="TreeGrafter"/>
</dbReference>
<dbReference type="GO" id="GO:0004126">
    <property type="term" value="F:cytidine deaminase activity"/>
    <property type="evidence" value="ECO:0007669"/>
    <property type="project" value="UniProtKB-UniRule"/>
</dbReference>
<dbReference type="GO" id="GO:0042802">
    <property type="term" value="F:identical protein binding"/>
    <property type="evidence" value="ECO:0007669"/>
    <property type="project" value="UniProtKB-ARBA"/>
</dbReference>
<dbReference type="GO" id="GO:0008270">
    <property type="term" value="F:zinc ion binding"/>
    <property type="evidence" value="ECO:0007669"/>
    <property type="project" value="UniProtKB-UniRule"/>
</dbReference>
<dbReference type="GO" id="GO:0009972">
    <property type="term" value="P:cytidine deamination"/>
    <property type="evidence" value="ECO:0007669"/>
    <property type="project" value="InterPro"/>
</dbReference>
<dbReference type="CDD" id="cd01283">
    <property type="entry name" value="cytidine_deaminase"/>
    <property type="match status" value="2"/>
</dbReference>
<dbReference type="FunFam" id="3.40.140.10:FF:000007">
    <property type="entry name" value="Cytidine deaminase"/>
    <property type="match status" value="1"/>
</dbReference>
<dbReference type="Gene3D" id="3.40.140.10">
    <property type="entry name" value="Cytidine Deaminase, domain 2"/>
    <property type="match status" value="2"/>
</dbReference>
<dbReference type="HAMAP" id="MF_01558">
    <property type="entry name" value="Cyt_deam"/>
    <property type="match status" value="1"/>
</dbReference>
<dbReference type="InterPro" id="IPR016192">
    <property type="entry name" value="APOBEC/CMP_deaminase_Zn-bd"/>
</dbReference>
<dbReference type="InterPro" id="IPR002125">
    <property type="entry name" value="CMP_dCMP_dom"/>
</dbReference>
<dbReference type="InterPro" id="IPR013171">
    <property type="entry name" value="Cyd/dCyd_deaminase_Zn-bd"/>
</dbReference>
<dbReference type="InterPro" id="IPR050202">
    <property type="entry name" value="Cyt/Deoxycyt_deaminase"/>
</dbReference>
<dbReference type="InterPro" id="IPR006263">
    <property type="entry name" value="Cyt_deam_dimer"/>
</dbReference>
<dbReference type="InterPro" id="IPR016193">
    <property type="entry name" value="Cytidine_deaminase-like"/>
</dbReference>
<dbReference type="InterPro" id="IPR020797">
    <property type="entry name" value="Cytidine_deaminase_bacteria"/>
</dbReference>
<dbReference type="NCBIfam" id="TIGR01355">
    <property type="entry name" value="cyt_deam_dimer"/>
    <property type="match status" value="1"/>
</dbReference>
<dbReference type="NCBIfam" id="NF006537">
    <property type="entry name" value="PRK09027.1"/>
    <property type="match status" value="1"/>
</dbReference>
<dbReference type="PANTHER" id="PTHR11644">
    <property type="entry name" value="CYTIDINE DEAMINASE"/>
    <property type="match status" value="1"/>
</dbReference>
<dbReference type="PANTHER" id="PTHR11644:SF2">
    <property type="entry name" value="CYTIDINE DEAMINASE"/>
    <property type="match status" value="1"/>
</dbReference>
<dbReference type="Pfam" id="PF00383">
    <property type="entry name" value="dCMP_cyt_deam_1"/>
    <property type="match status" value="1"/>
</dbReference>
<dbReference type="Pfam" id="PF08211">
    <property type="entry name" value="dCMP_cyt_deam_2"/>
    <property type="match status" value="1"/>
</dbReference>
<dbReference type="PIRSF" id="PIRSF006334">
    <property type="entry name" value="Cdd_plus_pseudo"/>
    <property type="match status" value="1"/>
</dbReference>
<dbReference type="SUPFAM" id="SSF53927">
    <property type="entry name" value="Cytidine deaminase-like"/>
    <property type="match status" value="2"/>
</dbReference>
<dbReference type="PROSITE" id="PS00903">
    <property type="entry name" value="CYT_DCMP_DEAMINASES_1"/>
    <property type="match status" value="1"/>
</dbReference>
<dbReference type="PROSITE" id="PS51747">
    <property type="entry name" value="CYT_DCMP_DEAMINASES_2"/>
    <property type="match status" value="2"/>
</dbReference>